<organism>
    <name type="scientific">Mus musculus</name>
    <name type="common">Mouse</name>
    <dbReference type="NCBI Taxonomy" id="10090"/>
    <lineage>
        <taxon>Eukaryota</taxon>
        <taxon>Metazoa</taxon>
        <taxon>Chordata</taxon>
        <taxon>Craniata</taxon>
        <taxon>Vertebrata</taxon>
        <taxon>Euteleostomi</taxon>
        <taxon>Mammalia</taxon>
        <taxon>Eutheria</taxon>
        <taxon>Euarchontoglires</taxon>
        <taxon>Glires</taxon>
        <taxon>Rodentia</taxon>
        <taxon>Myomorpha</taxon>
        <taxon>Muroidea</taxon>
        <taxon>Muridae</taxon>
        <taxon>Murinae</taxon>
        <taxon>Mus</taxon>
        <taxon>Mus</taxon>
    </lineage>
</organism>
<name>SOSB2_MOUSE</name>
<proteinExistence type="evidence at transcript level"/>
<gene>
    <name type="primary">Nabp1</name>
    <name type="synonym">Obfc2a</name>
    <name type="synonym">Ssb2</name>
</gene>
<sequence>MHGVNDPPLFIKDIKAGLKNLNVVFIVLEIGRVTKTKDGHEVRSCKVADRTGSITISVWDEIGGLIQTGDIIRLTRGYASMWKGCLTLYTGRGGELQKIGEFCMVYSEVPNFSEPNPDYRGQQNRGVQNEQKDKLSTNTFGPVGNGDQTGPESRGYHLPYGRSNGPGPISPQLPGTPSSQTVRTTISNARDPRRAFKR</sequence>
<keyword id="KW-0025">Alternative splicing</keyword>
<keyword id="KW-0227">DNA damage</keyword>
<keyword id="KW-0234">DNA repair</keyword>
<keyword id="KW-0238">DNA-binding</keyword>
<keyword id="KW-0539">Nucleus</keyword>
<keyword id="KW-1185">Reference proteome</keyword>
<dbReference type="EMBL" id="AY880264">
    <property type="protein sequence ID" value="AAX68444.1"/>
    <property type="molecule type" value="mRNA"/>
</dbReference>
<dbReference type="EMBL" id="AK015312">
    <property type="protein sequence ID" value="BAE43243.1"/>
    <property type="molecule type" value="mRNA"/>
</dbReference>
<dbReference type="EMBL" id="AK028886">
    <property type="protein sequence ID" value="BAC26173.1"/>
    <property type="molecule type" value="mRNA"/>
</dbReference>
<dbReference type="EMBL" id="AK028936">
    <property type="protein sequence ID" value="BAC26201.1"/>
    <property type="molecule type" value="mRNA"/>
</dbReference>
<dbReference type="EMBL" id="AK049396">
    <property type="protein sequence ID" value="BAC33732.1"/>
    <property type="molecule type" value="mRNA"/>
</dbReference>
<dbReference type="EMBL" id="AK083915">
    <property type="protein sequence ID" value="BAC39059.1"/>
    <property type="molecule type" value="mRNA"/>
</dbReference>
<dbReference type="EMBL" id="AK163613">
    <property type="protein sequence ID" value="BAE37421.1"/>
    <property type="molecule type" value="mRNA"/>
</dbReference>
<dbReference type="EMBL" id="AK166300">
    <property type="protein sequence ID" value="BAE38689.1"/>
    <property type="molecule type" value="mRNA"/>
</dbReference>
<dbReference type="EMBL" id="AK167652">
    <property type="protein sequence ID" value="BAE39703.1"/>
    <property type="molecule type" value="mRNA"/>
</dbReference>
<dbReference type="EMBL" id="BC095967">
    <property type="protein sequence ID" value="AAH95967.1"/>
    <property type="molecule type" value="mRNA"/>
</dbReference>
<dbReference type="EMBL" id="BC131923">
    <property type="protein sequence ID" value="AAI31924.1"/>
    <property type="molecule type" value="mRNA"/>
</dbReference>
<dbReference type="EMBL" id="BC132532">
    <property type="protein sequence ID" value="AAI32533.1"/>
    <property type="molecule type" value="mRNA"/>
</dbReference>
<dbReference type="CCDS" id="CCDS35559.1">
    <molecule id="Q8BGW5-1"/>
</dbReference>
<dbReference type="CCDS" id="CCDS78580.1">
    <molecule id="Q8BGW5-2"/>
</dbReference>
<dbReference type="RefSeq" id="NP_001297477.1">
    <molecule id="Q8BGW5-2"/>
    <property type="nucleotide sequence ID" value="NM_001310548.1"/>
</dbReference>
<dbReference type="RefSeq" id="NP_001297478.1">
    <molecule id="Q8BGW5-2"/>
    <property type="nucleotide sequence ID" value="NM_001310549.1"/>
</dbReference>
<dbReference type="RefSeq" id="NP_082972.2">
    <molecule id="Q8BGW5-1"/>
    <property type="nucleotide sequence ID" value="NM_028696.3"/>
</dbReference>
<dbReference type="SMR" id="Q8BGW5"/>
<dbReference type="ComplexPortal" id="CPX-615">
    <property type="entry name" value="SOSS2 complex"/>
</dbReference>
<dbReference type="FunCoup" id="Q8BGW5">
    <property type="interactions" value="2344"/>
</dbReference>
<dbReference type="STRING" id="10090.ENSMUSP00000027279"/>
<dbReference type="PhosphoSitePlus" id="Q8BGW5"/>
<dbReference type="PaxDb" id="10090-ENSMUSP00000027279"/>
<dbReference type="PeptideAtlas" id="Q8BGW5"/>
<dbReference type="ProteomicsDB" id="261553">
    <molecule id="Q8BGW5-1"/>
</dbReference>
<dbReference type="ProteomicsDB" id="261554">
    <molecule id="Q8BGW5-2"/>
</dbReference>
<dbReference type="Pumba" id="Q8BGW5"/>
<dbReference type="Antibodypedia" id="34048">
    <property type="antibodies" value="119 antibodies from 20 providers"/>
</dbReference>
<dbReference type="DNASU" id="109019"/>
<dbReference type="Ensembl" id="ENSMUST00000027279.12">
    <molecule id="Q8BGW5-1"/>
    <property type="protein sequence ID" value="ENSMUSP00000027279.6"/>
    <property type="gene ID" value="ENSMUSG00000026107.12"/>
</dbReference>
<dbReference type="Ensembl" id="ENSMUST00000185534.2">
    <molecule id="Q8BGW5-2"/>
    <property type="protein sequence ID" value="ENSMUSP00000140557.2"/>
    <property type="gene ID" value="ENSMUSG00000026107.12"/>
</dbReference>
<dbReference type="Ensembl" id="ENSMUST00000186003.7">
    <molecule id="Q8BGW5-2"/>
    <property type="protein sequence ID" value="ENSMUSP00000140126.2"/>
    <property type="gene ID" value="ENSMUSG00000026107.12"/>
</dbReference>
<dbReference type="Ensembl" id="ENSMUST00000186684.7">
    <molecule id="Q8BGW5-2"/>
    <property type="protein sequence ID" value="ENSMUSP00000140179.2"/>
    <property type="gene ID" value="ENSMUSG00000026107.12"/>
</dbReference>
<dbReference type="Ensembl" id="ENSMUST00000188051.7">
    <molecule id="Q8BGW5-2"/>
    <property type="protein sequence ID" value="ENSMUSP00000139853.2"/>
    <property type="gene ID" value="ENSMUSG00000026107.12"/>
</dbReference>
<dbReference type="Ensembl" id="ENSMUST00000188204.7">
    <molecule id="Q8BGW5-2"/>
    <property type="protein sequence ID" value="ENSMUSP00000140469.2"/>
    <property type="gene ID" value="ENSMUSG00000026107.12"/>
</dbReference>
<dbReference type="Ensembl" id="ENSMUST00000189542.7">
    <molecule id="Q8BGW5-2"/>
    <property type="protein sequence ID" value="ENSMUSP00000140059.2"/>
    <property type="gene ID" value="ENSMUSG00000026107.12"/>
</dbReference>
<dbReference type="Ensembl" id="ENSMUST00000190103.7">
    <molecule id="Q8BGW5-1"/>
    <property type="protein sequence ID" value="ENSMUSP00000140556.2"/>
    <property type="gene ID" value="ENSMUSG00000026107.12"/>
</dbReference>
<dbReference type="GeneID" id="109019"/>
<dbReference type="KEGG" id="mmu:109019"/>
<dbReference type="UCSC" id="uc007axn.1">
    <molecule id="Q8BGW5-1"/>
    <property type="organism name" value="mouse"/>
</dbReference>
<dbReference type="AGR" id="MGI:1923258"/>
<dbReference type="CTD" id="64859"/>
<dbReference type="MGI" id="MGI:1923258">
    <property type="gene designation" value="Nabp1"/>
</dbReference>
<dbReference type="VEuPathDB" id="HostDB:ENSMUSG00000026107"/>
<dbReference type="eggNOG" id="KOG3416">
    <property type="taxonomic scope" value="Eukaryota"/>
</dbReference>
<dbReference type="GeneTree" id="ENSGT00940000155812"/>
<dbReference type="HOGENOM" id="CLU_102724_2_0_1"/>
<dbReference type="InParanoid" id="Q8BGW5"/>
<dbReference type="OMA" id="AHGEQKN"/>
<dbReference type="OrthoDB" id="295715at2759"/>
<dbReference type="PhylomeDB" id="Q8BGW5"/>
<dbReference type="TreeFam" id="TF313902"/>
<dbReference type="Reactome" id="R-MMU-6807505">
    <property type="pathway name" value="RNA polymerase II transcribes snRNA genes"/>
</dbReference>
<dbReference type="BioGRID-ORCS" id="109019">
    <property type="hits" value="3 hits in 113 CRISPR screens"/>
</dbReference>
<dbReference type="ChiTaRS" id="Nabp1">
    <property type="organism name" value="mouse"/>
</dbReference>
<dbReference type="PRO" id="PR:Q8BGW5"/>
<dbReference type="Proteomes" id="UP000000589">
    <property type="component" value="Chromosome 1"/>
</dbReference>
<dbReference type="RNAct" id="Q8BGW5">
    <property type="molecule type" value="protein"/>
</dbReference>
<dbReference type="Bgee" id="ENSMUSG00000026107">
    <property type="expression patterns" value="Expressed in urinary bladder urothelium and 250 other cell types or tissues"/>
</dbReference>
<dbReference type="GO" id="GO:0000781">
    <property type="term" value="C:chromosome, telomeric region"/>
    <property type="evidence" value="ECO:0000314"/>
    <property type="project" value="BHF-UCL"/>
</dbReference>
<dbReference type="GO" id="GO:0005829">
    <property type="term" value="C:cytosol"/>
    <property type="evidence" value="ECO:0007669"/>
    <property type="project" value="Ensembl"/>
</dbReference>
<dbReference type="GO" id="GO:0005654">
    <property type="term" value="C:nucleoplasm"/>
    <property type="evidence" value="ECO:0007669"/>
    <property type="project" value="Ensembl"/>
</dbReference>
<dbReference type="GO" id="GO:0005634">
    <property type="term" value="C:nucleus"/>
    <property type="evidence" value="ECO:0000314"/>
    <property type="project" value="MGI"/>
</dbReference>
<dbReference type="GO" id="GO:0035861">
    <property type="term" value="C:site of double-strand break"/>
    <property type="evidence" value="ECO:0007669"/>
    <property type="project" value="Ensembl"/>
</dbReference>
<dbReference type="GO" id="GO:0070876">
    <property type="term" value="C:SOSS complex"/>
    <property type="evidence" value="ECO:0000250"/>
    <property type="project" value="UniProtKB"/>
</dbReference>
<dbReference type="GO" id="GO:0003723">
    <property type="term" value="F:RNA binding"/>
    <property type="evidence" value="ECO:0000314"/>
    <property type="project" value="MGI"/>
</dbReference>
<dbReference type="GO" id="GO:0003697">
    <property type="term" value="F:single-stranded DNA binding"/>
    <property type="evidence" value="ECO:0000314"/>
    <property type="project" value="MGI"/>
</dbReference>
<dbReference type="GO" id="GO:0006974">
    <property type="term" value="P:DNA damage response"/>
    <property type="evidence" value="ECO:0000250"/>
    <property type="project" value="UniProtKB"/>
</dbReference>
<dbReference type="GO" id="GO:0006281">
    <property type="term" value="P:DNA repair"/>
    <property type="evidence" value="ECO:0000250"/>
    <property type="project" value="UniProtKB"/>
</dbReference>
<dbReference type="GO" id="GO:0000724">
    <property type="term" value="P:double-strand break repair via homologous recombination"/>
    <property type="evidence" value="ECO:0000250"/>
    <property type="project" value="UniProtKB"/>
</dbReference>
<dbReference type="GO" id="GO:0044818">
    <property type="term" value="P:mitotic G2/M transition checkpoint"/>
    <property type="evidence" value="ECO:0000250"/>
    <property type="project" value="UniProtKB"/>
</dbReference>
<dbReference type="GO" id="GO:0010212">
    <property type="term" value="P:response to ionizing radiation"/>
    <property type="evidence" value="ECO:0000250"/>
    <property type="project" value="UniProtKB"/>
</dbReference>
<dbReference type="CDD" id="cd04491">
    <property type="entry name" value="SoSSB_OBF"/>
    <property type="match status" value="1"/>
</dbReference>
<dbReference type="FunFam" id="2.40.50.140:FF:000072">
    <property type="entry name" value="SOSS complex subunit B2"/>
    <property type="match status" value="1"/>
</dbReference>
<dbReference type="Gene3D" id="2.40.50.140">
    <property type="entry name" value="Nucleic acid-binding proteins"/>
    <property type="match status" value="1"/>
</dbReference>
<dbReference type="InterPro" id="IPR012340">
    <property type="entry name" value="NA-bd_OB-fold"/>
</dbReference>
<dbReference type="InterPro" id="IPR051231">
    <property type="entry name" value="SOSS-B"/>
</dbReference>
<dbReference type="PANTHER" id="PTHR13356">
    <property type="entry name" value="OB FOLD NUCLEIC ACID BINDING PROTEIN-RELATED"/>
    <property type="match status" value="1"/>
</dbReference>
<dbReference type="PANTHER" id="PTHR13356:SF5">
    <property type="entry name" value="SOSS COMPLEX SUBUNIT B2"/>
    <property type="match status" value="1"/>
</dbReference>
<dbReference type="SUPFAM" id="SSF50249">
    <property type="entry name" value="Nucleic acid-binding proteins"/>
    <property type="match status" value="1"/>
</dbReference>
<reference key="1">
    <citation type="journal article" date="2006" name="Biochem. J.">
        <title>NABP1, a novel RORgamma-regulated gene encoding a single-stranded nucleic-acid-binding protein.</title>
        <authorList>
            <person name="Kang H.S."/>
            <person name="Beak J.Y."/>
            <person name="Kim Y.-S."/>
            <person name="Petrovich R.M."/>
            <person name="Collins J.B."/>
            <person name="Grissom S.F."/>
            <person name="Jetten A.M."/>
        </authorList>
    </citation>
    <scope>NUCLEOTIDE SEQUENCE [MRNA] (ISOFORM 1)</scope>
    <scope>FUNCTION</scope>
    <scope>SUBCELLULAR LOCATION</scope>
    <scope>TISSUE SPECIFICITY</scope>
</reference>
<reference key="2">
    <citation type="journal article" date="2005" name="Science">
        <title>The transcriptional landscape of the mammalian genome.</title>
        <authorList>
            <person name="Carninci P."/>
            <person name="Kasukawa T."/>
            <person name="Katayama S."/>
            <person name="Gough J."/>
            <person name="Frith M.C."/>
            <person name="Maeda N."/>
            <person name="Oyama R."/>
            <person name="Ravasi T."/>
            <person name="Lenhard B."/>
            <person name="Wells C."/>
            <person name="Kodzius R."/>
            <person name="Shimokawa K."/>
            <person name="Bajic V.B."/>
            <person name="Brenner S.E."/>
            <person name="Batalov S."/>
            <person name="Forrest A.R."/>
            <person name="Zavolan M."/>
            <person name="Davis M.J."/>
            <person name="Wilming L.G."/>
            <person name="Aidinis V."/>
            <person name="Allen J.E."/>
            <person name="Ambesi-Impiombato A."/>
            <person name="Apweiler R."/>
            <person name="Aturaliya R.N."/>
            <person name="Bailey T.L."/>
            <person name="Bansal M."/>
            <person name="Baxter L."/>
            <person name="Beisel K.W."/>
            <person name="Bersano T."/>
            <person name="Bono H."/>
            <person name="Chalk A.M."/>
            <person name="Chiu K.P."/>
            <person name="Choudhary V."/>
            <person name="Christoffels A."/>
            <person name="Clutterbuck D.R."/>
            <person name="Crowe M.L."/>
            <person name="Dalla E."/>
            <person name="Dalrymple B.P."/>
            <person name="de Bono B."/>
            <person name="Della Gatta G."/>
            <person name="di Bernardo D."/>
            <person name="Down T."/>
            <person name="Engstrom P."/>
            <person name="Fagiolini M."/>
            <person name="Faulkner G."/>
            <person name="Fletcher C.F."/>
            <person name="Fukushima T."/>
            <person name="Furuno M."/>
            <person name="Futaki S."/>
            <person name="Gariboldi M."/>
            <person name="Georgii-Hemming P."/>
            <person name="Gingeras T.R."/>
            <person name="Gojobori T."/>
            <person name="Green R.E."/>
            <person name="Gustincich S."/>
            <person name="Harbers M."/>
            <person name="Hayashi Y."/>
            <person name="Hensch T.K."/>
            <person name="Hirokawa N."/>
            <person name="Hill D."/>
            <person name="Huminiecki L."/>
            <person name="Iacono M."/>
            <person name="Ikeo K."/>
            <person name="Iwama A."/>
            <person name="Ishikawa T."/>
            <person name="Jakt M."/>
            <person name="Kanapin A."/>
            <person name="Katoh M."/>
            <person name="Kawasawa Y."/>
            <person name="Kelso J."/>
            <person name="Kitamura H."/>
            <person name="Kitano H."/>
            <person name="Kollias G."/>
            <person name="Krishnan S.P."/>
            <person name="Kruger A."/>
            <person name="Kummerfeld S.K."/>
            <person name="Kurochkin I.V."/>
            <person name="Lareau L.F."/>
            <person name="Lazarevic D."/>
            <person name="Lipovich L."/>
            <person name="Liu J."/>
            <person name="Liuni S."/>
            <person name="McWilliam S."/>
            <person name="Madan Babu M."/>
            <person name="Madera M."/>
            <person name="Marchionni L."/>
            <person name="Matsuda H."/>
            <person name="Matsuzawa S."/>
            <person name="Miki H."/>
            <person name="Mignone F."/>
            <person name="Miyake S."/>
            <person name="Morris K."/>
            <person name="Mottagui-Tabar S."/>
            <person name="Mulder N."/>
            <person name="Nakano N."/>
            <person name="Nakauchi H."/>
            <person name="Ng P."/>
            <person name="Nilsson R."/>
            <person name="Nishiguchi S."/>
            <person name="Nishikawa S."/>
            <person name="Nori F."/>
            <person name="Ohara O."/>
            <person name="Okazaki Y."/>
            <person name="Orlando V."/>
            <person name="Pang K.C."/>
            <person name="Pavan W.J."/>
            <person name="Pavesi G."/>
            <person name="Pesole G."/>
            <person name="Petrovsky N."/>
            <person name="Piazza S."/>
            <person name="Reed J."/>
            <person name="Reid J.F."/>
            <person name="Ring B.Z."/>
            <person name="Ringwald M."/>
            <person name="Rost B."/>
            <person name="Ruan Y."/>
            <person name="Salzberg S.L."/>
            <person name="Sandelin A."/>
            <person name="Schneider C."/>
            <person name="Schoenbach C."/>
            <person name="Sekiguchi K."/>
            <person name="Semple C.A."/>
            <person name="Seno S."/>
            <person name="Sessa L."/>
            <person name="Sheng Y."/>
            <person name="Shibata Y."/>
            <person name="Shimada H."/>
            <person name="Shimada K."/>
            <person name="Silva D."/>
            <person name="Sinclair B."/>
            <person name="Sperling S."/>
            <person name="Stupka E."/>
            <person name="Sugiura K."/>
            <person name="Sultana R."/>
            <person name="Takenaka Y."/>
            <person name="Taki K."/>
            <person name="Tammoja K."/>
            <person name="Tan S.L."/>
            <person name="Tang S."/>
            <person name="Taylor M.S."/>
            <person name="Tegner J."/>
            <person name="Teichmann S.A."/>
            <person name="Ueda H.R."/>
            <person name="van Nimwegen E."/>
            <person name="Verardo R."/>
            <person name="Wei C.L."/>
            <person name="Yagi K."/>
            <person name="Yamanishi H."/>
            <person name="Zabarovsky E."/>
            <person name="Zhu S."/>
            <person name="Zimmer A."/>
            <person name="Hide W."/>
            <person name="Bult C."/>
            <person name="Grimmond S.M."/>
            <person name="Teasdale R.D."/>
            <person name="Liu E.T."/>
            <person name="Brusic V."/>
            <person name="Quackenbush J."/>
            <person name="Wahlestedt C."/>
            <person name="Mattick J.S."/>
            <person name="Hume D.A."/>
            <person name="Kai C."/>
            <person name="Sasaki D."/>
            <person name="Tomaru Y."/>
            <person name="Fukuda S."/>
            <person name="Kanamori-Katayama M."/>
            <person name="Suzuki M."/>
            <person name="Aoki J."/>
            <person name="Arakawa T."/>
            <person name="Iida J."/>
            <person name="Imamura K."/>
            <person name="Itoh M."/>
            <person name="Kato T."/>
            <person name="Kawaji H."/>
            <person name="Kawagashira N."/>
            <person name="Kawashima T."/>
            <person name="Kojima M."/>
            <person name="Kondo S."/>
            <person name="Konno H."/>
            <person name="Nakano K."/>
            <person name="Ninomiya N."/>
            <person name="Nishio T."/>
            <person name="Okada M."/>
            <person name="Plessy C."/>
            <person name="Shibata K."/>
            <person name="Shiraki T."/>
            <person name="Suzuki S."/>
            <person name="Tagami M."/>
            <person name="Waki K."/>
            <person name="Watahiki A."/>
            <person name="Okamura-Oho Y."/>
            <person name="Suzuki H."/>
            <person name="Kawai J."/>
            <person name="Hayashizaki Y."/>
        </authorList>
    </citation>
    <scope>NUCLEOTIDE SEQUENCE [LARGE SCALE MRNA] (ISOFORMS 1 AND 2)</scope>
    <source>
        <strain>C57BL/6J</strain>
        <tissue>Adipose tissue</tissue>
        <tissue>Amnion</tissue>
        <tissue>Embryo</tissue>
        <tissue>Mammary gland</tissue>
        <tissue>Skin</tissue>
        <tissue>Spinal ganglion</tissue>
        <tissue>Testis</tissue>
    </source>
</reference>
<reference key="3">
    <citation type="journal article" date="2004" name="Genome Res.">
        <title>The status, quality, and expansion of the NIH full-length cDNA project: the Mammalian Gene Collection (MGC).</title>
        <authorList>
            <consortium name="The MGC Project Team"/>
        </authorList>
    </citation>
    <scope>NUCLEOTIDE SEQUENCE [LARGE SCALE MRNA] (ISOFORM 1)</scope>
    <source>
        <strain>FVB/N-3</strain>
        <tissue>Brain</tissue>
        <tissue>Mammary tumor</tissue>
    </source>
</reference>
<feature type="chain" id="PRO_0000333955" description="SOSS complex subunit B2">
    <location>
        <begin position="1"/>
        <end position="198"/>
    </location>
</feature>
<feature type="DNA-binding region" description="OB">
    <location>
        <begin position="26"/>
        <end position="89"/>
    </location>
</feature>
<feature type="region of interest" description="Disordered" evidence="2">
    <location>
        <begin position="114"/>
        <end position="198"/>
    </location>
</feature>
<feature type="compositionally biased region" description="Polar residues" evidence="2">
    <location>
        <begin position="136"/>
        <end position="151"/>
    </location>
</feature>
<feature type="compositionally biased region" description="Polar residues" evidence="2">
    <location>
        <begin position="173"/>
        <end position="188"/>
    </location>
</feature>
<feature type="splice variant" id="VSP_033603" description="In isoform 2." evidence="4">
    <location>
        <begin position="1"/>
        <end position="80"/>
    </location>
</feature>
<feature type="sequence conflict" description="In Ref. 2; BAC26173." evidence="5" ref="2">
    <original>V</original>
    <variation>F</variation>
    <location>
        <position position="182"/>
    </location>
</feature>
<accession>Q8BGW5</accession>
<accession>Q8C154</accession>
<accession>Q8C164</accession>
<comment type="function">
    <text evidence="1 3">Component of the SOSS complex, a multiprotein complex that functions downstream of the MRN complex to promote DNA repair and G2/M checkpoint. In the SOSS complex, acts as a sensor of single-stranded DNA that binds to single-stranded DNA, in particular to polypyrimidines. The SOSS complex associates with DNA lesions and influences diverse endpoints in the cellular DNA damage response including cell-cycle checkpoint activation, recombinational repair and maintenance of genomic stability. Required for efficient homologous recombination-dependent repair of double-strand breaks (DSBs) and ATM-dependent signaling pathways (By similarity).</text>
</comment>
<comment type="subunit">
    <text evidence="1">Component of the SOSS complex, composed of SOSS-B (SOSS-B1/NABP2 or SOSS-B2/NABP1), SOSS-A/INTS3 and SOSS-C/INIP. SOSS complexes containing SOSS-B1/NABP2 are more abundant than complexes containing SOSS-B2/NABP1 (By similarity).</text>
</comment>
<comment type="subcellular location">
    <subcellularLocation>
        <location evidence="3">Nucleus</location>
    </subcellularLocation>
    <text evidence="1">Localizes to nuclear foci following DNA damage.</text>
</comment>
<comment type="alternative products">
    <event type="alternative splicing"/>
    <isoform>
        <id>Q8BGW5-1</id>
        <name>1</name>
        <sequence type="displayed"/>
    </isoform>
    <isoform>
        <id>Q8BGW5-2</id>
        <name>2</name>
        <sequence type="described" ref="VSP_033603"/>
    </isoform>
</comment>
<comment type="tissue specificity">
    <text evidence="3">Ubiquitous with high expression in the thymus.</text>
</comment>
<comment type="similarity">
    <text evidence="5">Belongs to the SOSS-B family. SOSS-B2 subfamily.</text>
</comment>
<evidence type="ECO:0000250" key="1"/>
<evidence type="ECO:0000256" key="2">
    <source>
        <dbReference type="SAM" id="MobiDB-lite"/>
    </source>
</evidence>
<evidence type="ECO:0000269" key="3">
    <source>
    </source>
</evidence>
<evidence type="ECO:0000303" key="4">
    <source>
    </source>
</evidence>
<evidence type="ECO:0000305" key="5"/>
<protein>
    <recommendedName>
        <fullName>SOSS complex subunit B2</fullName>
    </recommendedName>
    <alternativeName>
        <fullName>Nucleic acid-binding protein 1</fullName>
    </alternativeName>
    <alternativeName>
        <fullName>Oligonucleotide/oligosaccharide-binding fold-containing protein 2A</fullName>
    </alternativeName>
    <alternativeName>
        <fullName>Sensor of single-strand DNA complex subunit B2</fullName>
    </alternativeName>
    <alternativeName>
        <fullName>Sensor of ssDNA subunit B2</fullName>
        <shortName>SOSS-B2</shortName>
    </alternativeName>
    <alternativeName>
        <fullName>Single-stranded DNA-binding protein 2</fullName>
    </alternativeName>
</protein>